<keyword id="KW-0067">ATP-binding</keyword>
<keyword id="KW-0963">Cytoplasm</keyword>
<keyword id="KW-1015">Disulfide bond</keyword>
<keyword id="KW-0547">Nucleotide-binding</keyword>
<keyword id="KW-0694">RNA-binding</keyword>
<keyword id="KW-0808">Transferase</keyword>
<keyword id="KW-0819">tRNA processing</keyword>
<keyword id="KW-0820">tRNA-binding</keyword>
<dbReference type="EC" id="2.8.1.13" evidence="1"/>
<dbReference type="EMBL" id="AL766856">
    <property type="protein sequence ID" value="CAD47762.1"/>
    <property type="molecule type" value="Genomic_DNA"/>
</dbReference>
<dbReference type="RefSeq" id="WP_000131746.1">
    <property type="nucleotide sequence ID" value="NC_004368.1"/>
</dbReference>
<dbReference type="SMR" id="P66978"/>
<dbReference type="GeneID" id="66886879"/>
<dbReference type="KEGG" id="san:gbs2103"/>
<dbReference type="eggNOG" id="COG0482">
    <property type="taxonomic scope" value="Bacteria"/>
</dbReference>
<dbReference type="HOGENOM" id="CLU_035188_1_0_9"/>
<dbReference type="Proteomes" id="UP000000823">
    <property type="component" value="Chromosome"/>
</dbReference>
<dbReference type="GO" id="GO:0005737">
    <property type="term" value="C:cytoplasm"/>
    <property type="evidence" value="ECO:0007669"/>
    <property type="project" value="UniProtKB-SubCell"/>
</dbReference>
<dbReference type="GO" id="GO:0005524">
    <property type="term" value="F:ATP binding"/>
    <property type="evidence" value="ECO:0007669"/>
    <property type="project" value="UniProtKB-KW"/>
</dbReference>
<dbReference type="GO" id="GO:0000049">
    <property type="term" value="F:tRNA binding"/>
    <property type="evidence" value="ECO:0007669"/>
    <property type="project" value="UniProtKB-KW"/>
</dbReference>
<dbReference type="GO" id="GO:0103016">
    <property type="term" value="F:tRNA-uridine 2-sulfurtransferase activity"/>
    <property type="evidence" value="ECO:0007669"/>
    <property type="project" value="UniProtKB-EC"/>
</dbReference>
<dbReference type="GO" id="GO:0002143">
    <property type="term" value="P:tRNA wobble position uridine thiolation"/>
    <property type="evidence" value="ECO:0007669"/>
    <property type="project" value="TreeGrafter"/>
</dbReference>
<dbReference type="CDD" id="cd01998">
    <property type="entry name" value="MnmA_TRMU-like"/>
    <property type="match status" value="1"/>
</dbReference>
<dbReference type="FunFam" id="2.30.30.280:FF:000001">
    <property type="entry name" value="tRNA-specific 2-thiouridylase MnmA"/>
    <property type="match status" value="1"/>
</dbReference>
<dbReference type="FunFam" id="2.40.30.10:FF:000023">
    <property type="entry name" value="tRNA-specific 2-thiouridylase MnmA"/>
    <property type="match status" value="1"/>
</dbReference>
<dbReference type="FunFam" id="3.40.50.620:FF:000004">
    <property type="entry name" value="tRNA-specific 2-thiouridylase MnmA"/>
    <property type="match status" value="1"/>
</dbReference>
<dbReference type="Gene3D" id="2.30.30.280">
    <property type="entry name" value="Adenine nucleotide alpha hydrolases-like domains"/>
    <property type="match status" value="1"/>
</dbReference>
<dbReference type="Gene3D" id="3.40.50.620">
    <property type="entry name" value="HUPs"/>
    <property type="match status" value="1"/>
</dbReference>
<dbReference type="Gene3D" id="2.40.30.10">
    <property type="entry name" value="Translation factors"/>
    <property type="match status" value="1"/>
</dbReference>
<dbReference type="HAMAP" id="MF_00144">
    <property type="entry name" value="tRNA_thiouridyl_MnmA"/>
    <property type="match status" value="1"/>
</dbReference>
<dbReference type="InterPro" id="IPR004506">
    <property type="entry name" value="MnmA-like"/>
</dbReference>
<dbReference type="InterPro" id="IPR046885">
    <property type="entry name" value="MnmA-like_C"/>
</dbReference>
<dbReference type="InterPro" id="IPR046884">
    <property type="entry name" value="MnmA-like_central"/>
</dbReference>
<dbReference type="InterPro" id="IPR023382">
    <property type="entry name" value="MnmA-like_central_sf"/>
</dbReference>
<dbReference type="InterPro" id="IPR014729">
    <property type="entry name" value="Rossmann-like_a/b/a_fold"/>
</dbReference>
<dbReference type="NCBIfam" id="NF001138">
    <property type="entry name" value="PRK00143.1"/>
    <property type="match status" value="1"/>
</dbReference>
<dbReference type="NCBIfam" id="TIGR00420">
    <property type="entry name" value="trmU"/>
    <property type="match status" value="1"/>
</dbReference>
<dbReference type="PANTHER" id="PTHR11933:SF5">
    <property type="entry name" value="MITOCHONDRIAL TRNA-SPECIFIC 2-THIOURIDYLASE 1"/>
    <property type="match status" value="1"/>
</dbReference>
<dbReference type="PANTHER" id="PTHR11933">
    <property type="entry name" value="TRNA 5-METHYLAMINOMETHYL-2-THIOURIDYLATE -METHYLTRANSFERASE"/>
    <property type="match status" value="1"/>
</dbReference>
<dbReference type="Pfam" id="PF03054">
    <property type="entry name" value="tRNA_Me_trans"/>
    <property type="match status" value="1"/>
</dbReference>
<dbReference type="Pfam" id="PF20258">
    <property type="entry name" value="tRNA_Me_trans_C"/>
    <property type="match status" value="1"/>
</dbReference>
<dbReference type="Pfam" id="PF20259">
    <property type="entry name" value="tRNA_Me_trans_M"/>
    <property type="match status" value="1"/>
</dbReference>
<dbReference type="SUPFAM" id="SSF52402">
    <property type="entry name" value="Adenine nucleotide alpha hydrolases-like"/>
    <property type="match status" value="1"/>
</dbReference>
<name>MNMA_STRA3</name>
<accession>P66978</accession>
<accession>Q8CWZ9</accession>
<accession>Q8E2L9</accession>
<gene>
    <name evidence="1" type="primary">mnmA</name>
    <name type="synonym">trmU</name>
    <name type="ordered locus">gbs2103</name>
</gene>
<organism>
    <name type="scientific">Streptococcus agalactiae serotype III (strain NEM316)</name>
    <dbReference type="NCBI Taxonomy" id="211110"/>
    <lineage>
        <taxon>Bacteria</taxon>
        <taxon>Bacillati</taxon>
        <taxon>Bacillota</taxon>
        <taxon>Bacilli</taxon>
        <taxon>Lactobacillales</taxon>
        <taxon>Streptococcaceae</taxon>
        <taxon>Streptococcus</taxon>
    </lineage>
</organism>
<protein>
    <recommendedName>
        <fullName evidence="1">tRNA-specific 2-thiouridylase MnmA</fullName>
        <ecNumber evidence="1">2.8.1.13</ecNumber>
    </recommendedName>
</protein>
<feature type="chain" id="PRO_0000121681" description="tRNA-specific 2-thiouridylase MnmA">
    <location>
        <begin position="1"/>
        <end position="373"/>
    </location>
</feature>
<feature type="region of interest" description="Interaction with target base in tRNA" evidence="1">
    <location>
        <begin position="98"/>
        <end position="100"/>
    </location>
</feature>
<feature type="region of interest" description="Interaction with tRNA" evidence="1">
    <location>
        <begin position="150"/>
        <end position="152"/>
    </location>
</feature>
<feature type="region of interest" description="Interaction with tRNA" evidence="1">
    <location>
        <begin position="312"/>
        <end position="313"/>
    </location>
</feature>
<feature type="active site" description="Nucleophile" evidence="1">
    <location>
        <position position="103"/>
    </location>
</feature>
<feature type="active site" description="Cysteine persulfide intermediate" evidence="1">
    <location>
        <position position="200"/>
    </location>
</feature>
<feature type="binding site" evidence="1">
    <location>
        <begin position="12"/>
        <end position="19"/>
    </location>
    <ligand>
        <name>ATP</name>
        <dbReference type="ChEBI" id="CHEBI:30616"/>
    </ligand>
</feature>
<feature type="binding site" evidence="1">
    <location>
        <position position="38"/>
    </location>
    <ligand>
        <name>ATP</name>
        <dbReference type="ChEBI" id="CHEBI:30616"/>
    </ligand>
</feature>
<feature type="binding site" evidence="1">
    <location>
        <position position="127"/>
    </location>
    <ligand>
        <name>ATP</name>
        <dbReference type="ChEBI" id="CHEBI:30616"/>
    </ligand>
</feature>
<feature type="site" description="Interaction with tRNA" evidence="1">
    <location>
        <position position="128"/>
    </location>
</feature>
<feature type="site" description="Interaction with tRNA" evidence="1">
    <location>
        <position position="344"/>
    </location>
</feature>
<feature type="disulfide bond" description="Alternate" evidence="1">
    <location>
        <begin position="103"/>
        <end position="200"/>
    </location>
</feature>
<comment type="function">
    <text evidence="1">Catalyzes the 2-thiolation of uridine at the wobble position (U34) of tRNA, leading to the formation of s(2)U34.</text>
</comment>
<comment type="catalytic activity">
    <reaction evidence="1">
        <text>S-sulfanyl-L-cysteinyl-[protein] + uridine(34) in tRNA + AH2 + ATP = 2-thiouridine(34) in tRNA + L-cysteinyl-[protein] + A + AMP + diphosphate + H(+)</text>
        <dbReference type="Rhea" id="RHEA:47032"/>
        <dbReference type="Rhea" id="RHEA-COMP:10131"/>
        <dbReference type="Rhea" id="RHEA-COMP:11726"/>
        <dbReference type="Rhea" id="RHEA-COMP:11727"/>
        <dbReference type="Rhea" id="RHEA-COMP:11728"/>
        <dbReference type="ChEBI" id="CHEBI:13193"/>
        <dbReference type="ChEBI" id="CHEBI:15378"/>
        <dbReference type="ChEBI" id="CHEBI:17499"/>
        <dbReference type="ChEBI" id="CHEBI:29950"/>
        <dbReference type="ChEBI" id="CHEBI:30616"/>
        <dbReference type="ChEBI" id="CHEBI:33019"/>
        <dbReference type="ChEBI" id="CHEBI:61963"/>
        <dbReference type="ChEBI" id="CHEBI:65315"/>
        <dbReference type="ChEBI" id="CHEBI:87170"/>
        <dbReference type="ChEBI" id="CHEBI:456215"/>
        <dbReference type="EC" id="2.8.1.13"/>
    </reaction>
</comment>
<comment type="subcellular location">
    <subcellularLocation>
        <location evidence="1">Cytoplasm</location>
    </subcellularLocation>
</comment>
<comment type="similarity">
    <text evidence="1">Belongs to the MnmA/TRMU family.</text>
</comment>
<sequence>MTDNSNIRVVVGMSGGVDSSVTALLLKEQGYDVIGVFMKNWDDTDEFGVCTATEDYKDVAAVADQIGIPYYSVNFEKEYWDRVFEYFLAEYRAGRTPNPDVMCNKEIKFKAFLDYAMTLGADYVATGHYAQVTRDENGIVHMLRGADNNKDQTYFLSQLSQEQLQKTLFPLGHLQKPEVRRIAEEAGLATAKKKDSTGICFIGEKNFKDFLGQYLPAQPGRMMTVDGRDMGEHAGLMYYTIGQRGGLGIGGQHGGDNKPWFVVGKDLSKNILYVGQGFYHDSLMSTSLTASEIHFTRDMPNEFKLECTAKFRYRQPDSKVTVYVKGNQARVVFDDLQRAITPGQAVVFYNEQECLGGGMIDQAYRDDKICQYI</sequence>
<reference key="1">
    <citation type="journal article" date="2002" name="Mol. Microbiol.">
        <title>Genome sequence of Streptococcus agalactiae, a pathogen causing invasive neonatal disease.</title>
        <authorList>
            <person name="Glaser P."/>
            <person name="Rusniok C."/>
            <person name="Buchrieser C."/>
            <person name="Chevalier F."/>
            <person name="Frangeul L."/>
            <person name="Msadek T."/>
            <person name="Zouine M."/>
            <person name="Couve E."/>
            <person name="Lalioui L."/>
            <person name="Poyart C."/>
            <person name="Trieu-Cuot P."/>
            <person name="Kunst F."/>
        </authorList>
    </citation>
    <scope>NUCLEOTIDE SEQUENCE [LARGE SCALE GENOMIC DNA]</scope>
    <source>
        <strain>NEM316</strain>
    </source>
</reference>
<evidence type="ECO:0000255" key="1">
    <source>
        <dbReference type="HAMAP-Rule" id="MF_00144"/>
    </source>
</evidence>
<proteinExistence type="inferred from homology"/>